<proteinExistence type="inferred from homology"/>
<evidence type="ECO:0000250" key="1">
    <source>
        <dbReference type="UniProtKB" id="P48729"/>
    </source>
</evidence>
<evidence type="ECO:0000250" key="2">
    <source>
        <dbReference type="UniProtKB" id="Q8BK63"/>
    </source>
</evidence>
<evidence type="ECO:0000255" key="3">
    <source>
        <dbReference type="PROSITE-ProRule" id="PRU00159"/>
    </source>
</evidence>
<evidence type="ECO:0000255" key="4">
    <source>
        <dbReference type="PROSITE-ProRule" id="PRU10027"/>
    </source>
</evidence>
<evidence type="ECO:0000305" key="5"/>
<reference key="1">
    <citation type="submission" date="2000-11" db="EMBL/GenBank/DDBJ databases">
        <title>Ovine casein kinase I alpha gene.</title>
        <authorList>
            <person name="Yamamoto N."/>
        </authorList>
    </citation>
    <scope>NUCLEOTIDE SEQUENCE [GENOMIC DNA]</scope>
    <source>
        <tissue>Blood</tissue>
    </source>
</reference>
<gene>
    <name type="primary">CSNK1A1</name>
</gene>
<keyword id="KW-0007">Acetylation</keyword>
<keyword id="KW-0067">ATP-binding</keyword>
<keyword id="KW-0131">Cell cycle</keyword>
<keyword id="KW-0132">Cell division</keyword>
<keyword id="KW-0966">Cell projection</keyword>
<keyword id="KW-0137">Centromere</keyword>
<keyword id="KW-0158">Chromosome</keyword>
<keyword id="KW-0963">Cytoplasm</keyword>
<keyword id="KW-0206">Cytoskeleton</keyword>
<keyword id="KW-0418">Kinase</keyword>
<keyword id="KW-0995">Kinetochore</keyword>
<keyword id="KW-0498">Mitosis</keyword>
<keyword id="KW-0547">Nucleotide-binding</keyword>
<keyword id="KW-0539">Nucleus</keyword>
<keyword id="KW-0597">Phosphoprotein</keyword>
<keyword id="KW-1185">Reference proteome</keyword>
<keyword id="KW-0723">Serine/threonine-protein kinase</keyword>
<keyword id="KW-0808">Transferase</keyword>
<keyword id="KW-0879">Wnt signaling pathway</keyword>
<comment type="function">
    <text evidence="1 2">Casein kinases are operationally defined by their preferential utilization of acidic proteins such as caseins as substrates. It can phosphorylate a large number of proteins. Participates in Wnt signaling. Phosphorylates CTNNB1 at 'Ser-45' (By similarity). May phosphorylate PER1 and PER2 (By similarity). May play a role in segregating chromosomes during mitosis. May play a role in keratin cytoskeleton disassembly and thereby, it may regulate epithelial cell migration. Acts as a positive regulator of mTORC1 and mTORC2 signaling in response to nutrients by mediating phosphorylation of DEPTOR inhibitor (By similarity). Acts as an inhibitor of NLRP3 inflammasome assembly by mediating phosphorylation of NLRP3 (By similarity).</text>
</comment>
<comment type="catalytic activity">
    <reaction>
        <text>L-seryl-[protein] + ATP = O-phospho-L-seryl-[protein] + ADP + H(+)</text>
        <dbReference type="Rhea" id="RHEA:17989"/>
        <dbReference type="Rhea" id="RHEA-COMP:9863"/>
        <dbReference type="Rhea" id="RHEA-COMP:11604"/>
        <dbReference type="ChEBI" id="CHEBI:15378"/>
        <dbReference type="ChEBI" id="CHEBI:29999"/>
        <dbReference type="ChEBI" id="CHEBI:30616"/>
        <dbReference type="ChEBI" id="CHEBI:83421"/>
        <dbReference type="ChEBI" id="CHEBI:456216"/>
        <dbReference type="EC" id="2.7.11.1"/>
    </reaction>
</comment>
<comment type="catalytic activity">
    <reaction>
        <text>L-threonyl-[protein] + ATP = O-phospho-L-threonyl-[protein] + ADP + H(+)</text>
        <dbReference type="Rhea" id="RHEA:46608"/>
        <dbReference type="Rhea" id="RHEA-COMP:11060"/>
        <dbReference type="Rhea" id="RHEA-COMP:11605"/>
        <dbReference type="ChEBI" id="CHEBI:15378"/>
        <dbReference type="ChEBI" id="CHEBI:30013"/>
        <dbReference type="ChEBI" id="CHEBI:30616"/>
        <dbReference type="ChEBI" id="CHEBI:61977"/>
        <dbReference type="ChEBI" id="CHEBI:456216"/>
        <dbReference type="EC" id="2.7.11.1"/>
    </reaction>
</comment>
<comment type="subunit">
    <text evidence="1">Interacts with the Axin complex (By similarity). Interacts with TUT1, leading to TUT1 phosphorylation (By similarity). Interacts with FAM83A, FAM83B, FAM83C, FAM83D, FAM83E, FAM83F, FAM83G and FAM83H (via DUF1669). Interaction with FAM83H recruits CSNK1A1 to keratin filaments (By similarity).</text>
</comment>
<comment type="subcellular location">
    <subcellularLocation>
        <location evidence="1">Cytoplasm</location>
    </subcellularLocation>
    <subcellularLocation>
        <location evidence="1">Cytoplasm</location>
        <location evidence="1">Cytoskeleton</location>
        <location evidence="1">Microtubule organizing center</location>
        <location evidence="1">Centrosome</location>
    </subcellularLocation>
    <subcellularLocation>
        <location evidence="1">Chromosome</location>
        <location evidence="1">Centromere</location>
        <location evidence="1">Kinetochore</location>
    </subcellularLocation>
    <subcellularLocation>
        <location evidence="1">Nucleus speckle</location>
    </subcellularLocation>
    <subcellularLocation>
        <location evidence="2">Cytoplasm</location>
        <location evidence="2">Cytoskeleton</location>
        <location evidence="2">Cilium basal body</location>
    </subcellularLocation>
    <subcellularLocation>
        <location evidence="2">Cytoplasm</location>
        <location evidence="2">Cytoskeleton</location>
        <location evidence="2">Spindle</location>
    </subcellularLocation>
    <text evidence="1">Localizes to the centrosome in interphase cells, and to kinetochore fibers during mitosis. Also recruited to the keratin cytoskeleton.</text>
</comment>
<comment type="PTM">
    <text evidence="1">Phosphorylated by MTOR in response to mitogenic stimulation, leading to its activation.</text>
</comment>
<comment type="similarity">
    <text evidence="5">Belongs to the protein kinase superfamily. CK1 Ser/Thr protein kinase family. Casein kinase I subfamily.</text>
</comment>
<organism>
    <name type="scientific">Ovis aries</name>
    <name type="common">Sheep</name>
    <dbReference type="NCBI Taxonomy" id="9940"/>
    <lineage>
        <taxon>Eukaryota</taxon>
        <taxon>Metazoa</taxon>
        <taxon>Chordata</taxon>
        <taxon>Craniata</taxon>
        <taxon>Vertebrata</taxon>
        <taxon>Euteleostomi</taxon>
        <taxon>Mammalia</taxon>
        <taxon>Eutheria</taxon>
        <taxon>Laurasiatheria</taxon>
        <taxon>Artiodactyla</taxon>
        <taxon>Ruminantia</taxon>
        <taxon>Pecora</taxon>
        <taxon>Bovidae</taxon>
        <taxon>Caprinae</taxon>
        <taxon>Ovis</taxon>
    </lineage>
</organism>
<name>KC1A_SHEEP</name>
<dbReference type="EC" id="2.7.11.1"/>
<dbReference type="EMBL" id="AB050945">
    <property type="protein sequence ID" value="BAB17769.1"/>
    <property type="molecule type" value="Genomic_DNA"/>
</dbReference>
<dbReference type="RefSeq" id="XP_027826193.1">
    <property type="nucleotide sequence ID" value="XM_027970392.3"/>
</dbReference>
<dbReference type="SMR" id="P67829"/>
<dbReference type="STRING" id="9940.ENSOARP00000005839"/>
<dbReference type="PaxDb" id="9940-ENSOARP00000005839"/>
<dbReference type="Ensembl" id="ENSOART00225075264">
    <property type="protein sequence ID" value="ENSOARP00225038616"/>
    <property type="gene ID" value="ENSOARG00225045301"/>
</dbReference>
<dbReference type="Ensembl" id="ENSOART00225075266">
    <property type="protein sequence ID" value="ENSOARP00225038618"/>
    <property type="gene ID" value="ENSOARG00225045301"/>
</dbReference>
<dbReference type="GeneID" id="101120241"/>
<dbReference type="eggNOG" id="KOG1163">
    <property type="taxonomic scope" value="Eukaryota"/>
</dbReference>
<dbReference type="HOGENOM" id="CLU_019279_2_7_1"/>
<dbReference type="Proteomes" id="UP000002356">
    <property type="component" value="Chromosome 5"/>
</dbReference>
<dbReference type="Bgee" id="ENSOARG00000005440">
    <property type="expression patterns" value="Expressed in testis and 55 other cell types or tissues"/>
</dbReference>
<dbReference type="ExpressionAtlas" id="P67829">
    <property type="expression patterns" value="baseline"/>
</dbReference>
<dbReference type="GO" id="GO:0005813">
    <property type="term" value="C:centrosome"/>
    <property type="evidence" value="ECO:0007669"/>
    <property type="project" value="UniProtKB-SubCell"/>
</dbReference>
<dbReference type="GO" id="GO:0036064">
    <property type="term" value="C:ciliary basal body"/>
    <property type="evidence" value="ECO:0000250"/>
    <property type="project" value="UniProtKB"/>
</dbReference>
<dbReference type="GO" id="GO:0005737">
    <property type="term" value="C:cytoplasm"/>
    <property type="evidence" value="ECO:0007669"/>
    <property type="project" value="UniProtKB-SubCell"/>
</dbReference>
<dbReference type="GO" id="GO:0000776">
    <property type="term" value="C:kinetochore"/>
    <property type="evidence" value="ECO:0007669"/>
    <property type="project" value="UniProtKB-KW"/>
</dbReference>
<dbReference type="GO" id="GO:0016607">
    <property type="term" value="C:nuclear speck"/>
    <property type="evidence" value="ECO:0000250"/>
    <property type="project" value="UniProtKB"/>
</dbReference>
<dbReference type="GO" id="GO:0005819">
    <property type="term" value="C:spindle"/>
    <property type="evidence" value="ECO:0000250"/>
    <property type="project" value="UniProtKB"/>
</dbReference>
<dbReference type="GO" id="GO:0005524">
    <property type="term" value="F:ATP binding"/>
    <property type="evidence" value="ECO:0007669"/>
    <property type="project" value="UniProtKB-KW"/>
</dbReference>
<dbReference type="GO" id="GO:0004672">
    <property type="term" value="F:protein kinase activity"/>
    <property type="evidence" value="ECO:0000250"/>
    <property type="project" value="UniProtKB"/>
</dbReference>
<dbReference type="GO" id="GO:0106310">
    <property type="term" value="F:protein serine kinase activity"/>
    <property type="evidence" value="ECO:0007669"/>
    <property type="project" value="RHEA"/>
</dbReference>
<dbReference type="GO" id="GO:0004674">
    <property type="term" value="F:protein serine/threonine kinase activity"/>
    <property type="evidence" value="ECO:0000250"/>
    <property type="project" value="UniProtKB"/>
</dbReference>
<dbReference type="GO" id="GO:0051301">
    <property type="term" value="P:cell division"/>
    <property type="evidence" value="ECO:0007669"/>
    <property type="project" value="UniProtKB-KW"/>
</dbReference>
<dbReference type="GO" id="GO:0045104">
    <property type="term" value="P:intermediate filament cytoskeleton organization"/>
    <property type="evidence" value="ECO:0000250"/>
    <property type="project" value="UniProtKB"/>
</dbReference>
<dbReference type="GO" id="GO:1900226">
    <property type="term" value="P:negative regulation of NLRP3 inflammasome complex assembly"/>
    <property type="evidence" value="ECO:0000250"/>
    <property type="project" value="UniProtKB"/>
</dbReference>
<dbReference type="GO" id="GO:0006468">
    <property type="term" value="P:protein phosphorylation"/>
    <property type="evidence" value="ECO:0000250"/>
    <property type="project" value="UniProtKB"/>
</dbReference>
<dbReference type="GO" id="GO:0016055">
    <property type="term" value="P:Wnt signaling pathway"/>
    <property type="evidence" value="ECO:0007669"/>
    <property type="project" value="UniProtKB-KW"/>
</dbReference>
<dbReference type="CDD" id="cd14128">
    <property type="entry name" value="STKc_CK1_alpha"/>
    <property type="match status" value="1"/>
</dbReference>
<dbReference type="FunFam" id="1.10.510.10:FF:000120">
    <property type="entry name" value="Casein kinase I isoform alpha"/>
    <property type="match status" value="1"/>
</dbReference>
<dbReference type="FunFam" id="3.30.200.20:FF:000538">
    <property type="entry name" value="Putative Casein kinase I"/>
    <property type="match status" value="1"/>
</dbReference>
<dbReference type="Gene3D" id="1.10.510.10">
    <property type="entry name" value="Transferase(Phosphotransferase) domain 1"/>
    <property type="match status" value="1"/>
</dbReference>
<dbReference type="InterPro" id="IPR050235">
    <property type="entry name" value="CK1_Ser-Thr_kinase"/>
</dbReference>
<dbReference type="InterPro" id="IPR011009">
    <property type="entry name" value="Kinase-like_dom_sf"/>
</dbReference>
<dbReference type="InterPro" id="IPR000719">
    <property type="entry name" value="Prot_kinase_dom"/>
</dbReference>
<dbReference type="InterPro" id="IPR017441">
    <property type="entry name" value="Protein_kinase_ATP_BS"/>
</dbReference>
<dbReference type="InterPro" id="IPR008271">
    <property type="entry name" value="Ser/Thr_kinase_AS"/>
</dbReference>
<dbReference type="PANTHER" id="PTHR11909">
    <property type="entry name" value="CASEIN KINASE-RELATED"/>
    <property type="match status" value="1"/>
</dbReference>
<dbReference type="Pfam" id="PF00069">
    <property type="entry name" value="Pkinase"/>
    <property type="match status" value="1"/>
</dbReference>
<dbReference type="SMART" id="SM00220">
    <property type="entry name" value="S_TKc"/>
    <property type="match status" value="1"/>
</dbReference>
<dbReference type="SUPFAM" id="SSF56112">
    <property type="entry name" value="Protein kinase-like (PK-like)"/>
    <property type="match status" value="1"/>
</dbReference>
<dbReference type="PROSITE" id="PS00107">
    <property type="entry name" value="PROTEIN_KINASE_ATP"/>
    <property type="match status" value="1"/>
</dbReference>
<dbReference type="PROSITE" id="PS50011">
    <property type="entry name" value="PROTEIN_KINASE_DOM"/>
    <property type="match status" value="1"/>
</dbReference>
<dbReference type="PROSITE" id="PS00108">
    <property type="entry name" value="PROTEIN_KINASE_ST"/>
    <property type="match status" value="1"/>
</dbReference>
<accession>P67829</accession>
<accession>P35506</accession>
<sequence length="325" mass="37567">MASSSGSKAEFIVGGKYKLVRKIGSGSFGDIYLAINITNGEEVAVKLESQKARHPQLLYESKLYKILQGGVGIPHIRWYGQEKDYNVLVMDLLGPSLEDLFNFCSRRFTMKTVLMLADQMISRIEYVHTKNFIHRDIKPDNFLMGIGRHCNKLFLIDFGLAKKYRDNRTRQHIPYREDKNLTGTARYASINAHLGIEQSRRDDMESLGYVLMYFNRTSLPWQGLKAATKKQKYEKISEKKMSTPVEVLCKGFPAEFAMYLNYCRGLRFEEAPDYMYLRQLFRILFRTLNHQYDYTFDWTMLKQKAAQQAASSSGQGQQAQTPTGF</sequence>
<feature type="initiator methionine" description="Removed" evidence="1">
    <location>
        <position position="1"/>
    </location>
</feature>
<feature type="chain" id="PRO_0000192827" description="Casein kinase I isoform alpha">
    <location>
        <begin position="2"/>
        <end position="325"/>
    </location>
</feature>
<feature type="domain" description="Protein kinase" evidence="3">
    <location>
        <begin position="17"/>
        <end position="285"/>
    </location>
</feature>
<feature type="active site" description="Proton acceptor" evidence="3 4">
    <location>
        <position position="136"/>
    </location>
</feature>
<feature type="binding site" evidence="3">
    <location>
        <begin position="23"/>
        <end position="31"/>
    </location>
    <ligand>
        <name>ATP</name>
        <dbReference type="ChEBI" id="CHEBI:30616"/>
    </ligand>
</feature>
<feature type="binding site" evidence="3">
    <location>
        <position position="46"/>
    </location>
    <ligand>
        <name>ATP</name>
        <dbReference type="ChEBI" id="CHEBI:30616"/>
    </ligand>
</feature>
<feature type="modified residue" description="N-acetylalanine" evidence="1">
    <location>
        <position position="2"/>
    </location>
</feature>
<feature type="modified residue" description="Phosphoserine" evidence="1">
    <location>
        <position position="4"/>
    </location>
</feature>
<feature type="modified residue" description="N6-acetyllysine" evidence="1">
    <location>
        <position position="8"/>
    </location>
</feature>
<protein>
    <recommendedName>
        <fullName>Casein kinase I isoform alpha</fullName>
        <shortName>CKI-alpha</shortName>
        <ecNumber>2.7.11.1</ecNumber>
    </recommendedName>
    <alternativeName>
        <fullName>CK1</fullName>
    </alternativeName>
</protein>